<reference key="1">
    <citation type="submission" date="2007-04" db="EMBL/GenBank/DDBJ databases">
        <title>Complete sequence of Shewanella putrefaciens CN-32.</title>
        <authorList>
            <consortium name="US DOE Joint Genome Institute"/>
            <person name="Copeland A."/>
            <person name="Lucas S."/>
            <person name="Lapidus A."/>
            <person name="Barry K."/>
            <person name="Detter J.C."/>
            <person name="Glavina del Rio T."/>
            <person name="Hammon N."/>
            <person name="Israni S."/>
            <person name="Dalin E."/>
            <person name="Tice H."/>
            <person name="Pitluck S."/>
            <person name="Chain P."/>
            <person name="Malfatti S."/>
            <person name="Shin M."/>
            <person name="Vergez L."/>
            <person name="Schmutz J."/>
            <person name="Larimer F."/>
            <person name="Land M."/>
            <person name="Hauser L."/>
            <person name="Kyrpides N."/>
            <person name="Mikhailova N."/>
            <person name="Romine M.F."/>
            <person name="Fredrickson J."/>
            <person name="Tiedje J."/>
            <person name="Richardson P."/>
        </authorList>
    </citation>
    <scope>NUCLEOTIDE SEQUENCE [LARGE SCALE GENOMIC DNA]</scope>
    <source>
        <strain>CN-32 / ATCC BAA-453</strain>
    </source>
</reference>
<proteinExistence type="inferred from homology"/>
<keyword id="KW-0687">Ribonucleoprotein</keyword>
<keyword id="KW-0689">Ribosomal protein</keyword>
<keyword id="KW-0694">RNA-binding</keyword>
<keyword id="KW-0699">rRNA-binding</keyword>
<gene>
    <name evidence="1" type="primary">rplD</name>
    <name type="ordered locus">Sputcn32_3758</name>
</gene>
<comment type="function">
    <text evidence="1">One of the primary rRNA binding proteins, this protein initially binds near the 5'-end of the 23S rRNA. It is important during the early stages of 50S assembly. It makes multiple contacts with different domains of the 23S rRNA in the assembled 50S subunit and ribosome.</text>
</comment>
<comment type="function">
    <text evidence="1">Forms part of the polypeptide exit tunnel.</text>
</comment>
<comment type="subunit">
    <text evidence="1">Part of the 50S ribosomal subunit.</text>
</comment>
<comment type="similarity">
    <text evidence="1">Belongs to the universal ribosomal protein uL4 family.</text>
</comment>
<organism>
    <name type="scientific">Shewanella putrefaciens (strain CN-32 / ATCC BAA-453)</name>
    <dbReference type="NCBI Taxonomy" id="319224"/>
    <lineage>
        <taxon>Bacteria</taxon>
        <taxon>Pseudomonadati</taxon>
        <taxon>Pseudomonadota</taxon>
        <taxon>Gammaproteobacteria</taxon>
        <taxon>Alteromonadales</taxon>
        <taxon>Shewanellaceae</taxon>
        <taxon>Shewanella</taxon>
    </lineage>
</organism>
<accession>A4YBY2</accession>
<dbReference type="EMBL" id="CP000681">
    <property type="protein sequence ID" value="ABP77465.1"/>
    <property type="molecule type" value="Genomic_DNA"/>
</dbReference>
<dbReference type="SMR" id="A4YBY2"/>
<dbReference type="STRING" id="319224.Sputcn32_3758"/>
<dbReference type="KEGG" id="spc:Sputcn32_3758"/>
<dbReference type="eggNOG" id="COG0088">
    <property type="taxonomic scope" value="Bacteria"/>
</dbReference>
<dbReference type="HOGENOM" id="CLU_041575_5_2_6"/>
<dbReference type="GO" id="GO:1990904">
    <property type="term" value="C:ribonucleoprotein complex"/>
    <property type="evidence" value="ECO:0007669"/>
    <property type="project" value="UniProtKB-KW"/>
</dbReference>
<dbReference type="GO" id="GO:0005840">
    <property type="term" value="C:ribosome"/>
    <property type="evidence" value="ECO:0007669"/>
    <property type="project" value="UniProtKB-KW"/>
</dbReference>
<dbReference type="GO" id="GO:0019843">
    <property type="term" value="F:rRNA binding"/>
    <property type="evidence" value="ECO:0007669"/>
    <property type="project" value="UniProtKB-UniRule"/>
</dbReference>
<dbReference type="GO" id="GO:0003735">
    <property type="term" value="F:structural constituent of ribosome"/>
    <property type="evidence" value="ECO:0007669"/>
    <property type="project" value="InterPro"/>
</dbReference>
<dbReference type="GO" id="GO:0006412">
    <property type="term" value="P:translation"/>
    <property type="evidence" value="ECO:0007669"/>
    <property type="project" value="UniProtKB-UniRule"/>
</dbReference>
<dbReference type="FunFam" id="3.40.1370.10:FF:000001">
    <property type="entry name" value="50S ribosomal protein L4"/>
    <property type="match status" value="1"/>
</dbReference>
<dbReference type="Gene3D" id="3.40.1370.10">
    <property type="match status" value="1"/>
</dbReference>
<dbReference type="HAMAP" id="MF_01328_B">
    <property type="entry name" value="Ribosomal_uL4_B"/>
    <property type="match status" value="1"/>
</dbReference>
<dbReference type="InterPro" id="IPR002136">
    <property type="entry name" value="Ribosomal_uL4"/>
</dbReference>
<dbReference type="InterPro" id="IPR013005">
    <property type="entry name" value="Ribosomal_uL4-like"/>
</dbReference>
<dbReference type="InterPro" id="IPR023574">
    <property type="entry name" value="Ribosomal_uL4_dom_sf"/>
</dbReference>
<dbReference type="NCBIfam" id="TIGR03953">
    <property type="entry name" value="rplD_bact"/>
    <property type="match status" value="1"/>
</dbReference>
<dbReference type="PANTHER" id="PTHR10746">
    <property type="entry name" value="50S RIBOSOMAL PROTEIN L4"/>
    <property type="match status" value="1"/>
</dbReference>
<dbReference type="PANTHER" id="PTHR10746:SF6">
    <property type="entry name" value="LARGE RIBOSOMAL SUBUNIT PROTEIN UL4M"/>
    <property type="match status" value="1"/>
</dbReference>
<dbReference type="Pfam" id="PF00573">
    <property type="entry name" value="Ribosomal_L4"/>
    <property type="match status" value="1"/>
</dbReference>
<dbReference type="SUPFAM" id="SSF52166">
    <property type="entry name" value="Ribosomal protein L4"/>
    <property type="match status" value="1"/>
</dbReference>
<evidence type="ECO:0000255" key="1">
    <source>
        <dbReference type="HAMAP-Rule" id="MF_01328"/>
    </source>
</evidence>
<evidence type="ECO:0000256" key="2">
    <source>
        <dbReference type="SAM" id="MobiDB-lite"/>
    </source>
</evidence>
<evidence type="ECO:0000305" key="3"/>
<feature type="chain" id="PRO_1000052496" description="Large ribosomal subunit protein uL4">
    <location>
        <begin position="1"/>
        <end position="201"/>
    </location>
</feature>
<feature type="region of interest" description="Disordered" evidence="2">
    <location>
        <begin position="45"/>
        <end position="72"/>
    </location>
</feature>
<protein>
    <recommendedName>
        <fullName evidence="1">Large ribosomal subunit protein uL4</fullName>
    </recommendedName>
    <alternativeName>
        <fullName evidence="3">50S ribosomal protein L4</fullName>
    </alternativeName>
</protein>
<sequence length="201" mass="21979">MELVLKDAQSALEVSETTFGRDFNEALVHQVVVAYAANARQGTRAQKTRAEVTGSGKKPWRQKGTGRARAGSVKGPIWRGGGVTFAAKTQDHSQKVNKKMYRGALKSILSELVRQERLVVVESFGVEAPKTKELKAKLKAMNLEDVLIVTAEVDENLFLAARNLYKVDVRDVAGLDPVSLIAFNTVLVTADAVKQIEEMLA</sequence>
<name>RL4_SHEPC</name>